<sequence>MTKYISALGLDVGRKRVGVAGCDRTGLIATGITTVERTSFDRDVQQIQNIVNERQVQVLVVGLPYSMDGSLGFQARQVQKFTSRLAKALQLPVEYVDERLTSFQAEQMLIAENVSPSRNKGLIDRKAAALILQQWLDIRRTNAQSSVAVEY</sequence>
<feature type="chain" id="PRO_0000172011" description="Putative pre-16S rRNA nuclease">
    <location>
        <begin position="1"/>
        <end position="151"/>
    </location>
</feature>
<accession>Q8YSI5</accession>
<gene>
    <name type="ordered locus">alr3100</name>
</gene>
<reference key="1">
    <citation type="journal article" date="2001" name="DNA Res.">
        <title>Complete genomic sequence of the filamentous nitrogen-fixing cyanobacterium Anabaena sp. strain PCC 7120.</title>
        <authorList>
            <person name="Kaneko T."/>
            <person name="Nakamura Y."/>
            <person name="Wolk C.P."/>
            <person name="Kuritz T."/>
            <person name="Sasamoto S."/>
            <person name="Watanabe A."/>
            <person name="Iriguchi M."/>
            <person name="Ishikawa A."/>
            <person name="Kawashima K."/>
            <person name="Kimura T."/>
            <person name="Kishida Y."/>
            <person name="Kohara M."/>
            <person name="Matsumoto M."/>
            <person name="Matsuno A."/>
            <person name="Muraki A."/>
            <person name="Nakazaki N."/>
            <person name="Shimpo S."/>
            <person name="Sugimoto M."/>
            <person name="Takazawa M."/>
            <person name="Yamada M."/>
            <person name="Yasuda M."/>
            <person name="Tabata S."/>
        </authorList>
    </citation>
    <scope>NUCLEOTIDE SEQUENCE [LARGE SCALE GENOMIC DNA]</scope>
    <source>
        <strain>PCC 7120 / SAG 25.82 / UTEX 2576</strain>
    </source>
</reference>
<comment type="function">
    <text evidence="1">Could be a nuclease involved in processing of the 5'-end of pre-16S rRNA.</text>
</comment>
<comment type="subcellular location">
    <subcellularLocation>
        <location evidence="1">Cytoplasm</location>
    </subcellularLocation>
</comment>
<comment type="similarity">
    <text evidence="1">Belongs to the YqgF nuclease family.</text>
</comment>
<evidence type="ECO:0000255" key="1">
    <source>
        <dbReference type="HAMAP-Rule" id="MF_00651"/>
    </source>
</evidence>
<name>YQGF_NOSS1</name>
<proteinExistence type="inferred from homology"/>
<organism>
    <name type="scientific">Nostoc sp. (strain PCC 7120 / SAG 25.82 / UTEX 2576)</name>
    <dbReference type="NCBI Taxonomy" id="103690"/>
    <lineage>
        <taxon>Bacteria</taxon>
        <taxon>Bacillati</taxon>
        <taxon>Cyanobacteriota</taxon>
        <taxon>Cyanophyceae</taxon>
        <taxon>Nostocales</taxon>
        <taxon>Nostocaceae</taxon>
        <taxon>Nostoc</taxon>
    </lineage>
</organism>
<keyword id="KW-0963">Cytoplasm</keyword>
<keyword id="KW-0378">Hydrolase</keyword>
<keyword id="KW-0540">Nuclease</keyword>
<keyword id="KW-1185">Reference proteome</keyword>
<keyword id="KW-0690">Ribosome biogenesis</keyword>
<protein>
    <recommendedName>
        <fullName evidence="1">Putative pre-16S rRNA nuclease</fullName>
        <ecNumber evidence="1">3.1.-.-</ecNumber>
    </recommendedName>
</protein>
<dbReference type="EC" id="3.1.-.-" evidence="1"/>
<dbReference type="EMBL" id="BA000019">
    <property type="protein sequence ID" value="BAB74799.1"/>
    <property type="molecule type" value="Genomic_DNA"/>
</dbReference>
<dbReference type="PIR" id="AE2193">
    <property type="entry name" value="AE2193"/>
</dbReference>
<dbReference type="SMR" id="Q8YSI5"/>
<dbReference type="STRING" id="103690.gene:10495136"/>
<dbReference type="KEGG" id="ana:alr3100"/>
<dbReference type="eggNOG" id="COG0816">
    <property type="taxonomic scope" value="Bacteria"/>
</dbReference>
<dbReference type="OrthoDB" id="9796140at2"/>
<dbReference type="Proteomes" id="UP000002483">
    <property type="component" value="Chromosome"/>
</dbReference>
<dbReference type="GO" id="GO:0005829">
    <property type="term" value="C:cytosol"/>
    <property type="evidence" value="ECO:0007669"/>
    <property type="project" value="TreeGrafter"/>
</dbReference>
<dbReference type="GO" id="GO:0004518">
    <property type="term" value="F:nuclease activity"/>
    <property type="evidence" value="ECO:0007669"/>
    <property type="project" value="UniProtKB-KW"/>
</dbReference>
<dbReference type="GO" id="GO:0000967">
    <property type="term" value="P:rRNA 5'-end processing"/>
    <property type="evidence" value="ECO:0007669"/>
    <property type="project" value="UniProtKB-UniRule"/>
</dbReference>
<dbReference type="CDD" id="cd16964">
    <property type="entry name" value="YqgF"/>
    <property type="match status" value="1"/>
</dbReference>
<dbReference type="Gene3D" id="3.30.420.140">
    <property type="entry name" value="YqgF/RNase H-like domain"/>
    <property type="match status" value="1"/>
</dbReference>
<dbReference type="HAMAP" id="MF_00651">
    <property type="entry name" value="Nuclease_YqgF"/>
    <property type="match status" value="1"/>
</dbReference>
<dbReference type="InterPro" id="IPR012337">
    <property type="entry name" value="RNaseH-like_sf"/>
</dbReference>
<dbReference type="InterPro" id="IPR005227">
    <property type="entry name" value="YqgF"/>
</dbReference>
<dbReference type="InterPro" id="IPR006641">
    <property type="entry name" value="YqgF/RNaseH-like_dom"/>
</dbReference>
<dbReference type="InterPro" id="IPR037027">
    <property type="entry name" value="YqgF/RNaseH-like_dom_sf"/>
</dbReference>
<dbReference type="NCBIfam" id="TIGR00250">
    <property type="entry name" value="RNAse_H_YqgF"/>
    <property type="match status" value="1"/>
</dbReference>
<dbReference type="PANTHER" id="PTHR33317">
    <property type="entry name" value="POLYNUCLEOTIDYL TRANSFERASE, RIBONUCLEASE H-LIKE SUPERFAMILY PROTEIN"/>
    <property type="match status" value="1"/>
</dbReference>
<dbReference type="PANTHER" id="PTHR33317:SF4">
    <property type="entry name" value="POLYNUCLEOTIDYL TRANSFERASE, RIBONUCLEASE H-LIKE SUPERFAMILY PROTEIN"/>
    <property type="match status" value="1"/>
</dbReference>
<dbReference type="Pfam" id="PF03652">
    <property type="entry name" value="RuvX"/>
    <property type="match status" value="1"/>
</dbReference>
<dbReference type="SMART" id="SM00732">
    <property type="entry name" value="YqgFc"/>
    <property type="match status" value="1"/>
</dbReference>
<dbReference type="SUPFAM" id="SSF53098">
    <property type="entry name" value="Ribonuclease H-like"/>
    <property type="match status" value="1"/>
</dbReference>